<keyword id="KW-0066">ATP synthesis</keyword>
<keyword id="KW-1003">Cell membrane</keyword>
<keyword id="KW-0138">CF(0)</keyword>
<keyword id="KW-0375">Hydrogen ion transport</keyword>
<keyword id="KW-0406">Ion transport</keyword>
<keyword id="KW-0472">Membrane</keyword>
<keyword id="KW-1185">Reference proteome</keyword>
<keyword id="KW-0812">Transmembrane</keyword>
<keyword id="KW-1133">Transmembrane helix</keyword>
<keyword id="KW-0813">Transport</keyword>
<reference key="1">
    <citation type="journal article" date="2008" name="Genome Res.">
        <title>The genome of Pelotomaculum thermopropionicum reveals niche-associated evolution in anaerobic microbiota.</title>
        <authorList>
            <person name="Kosaka T."/>
            <person name="Kato S."/>
            <person name="Shimoyama T."/>
            <person name="Ishii S."/>
            <person name="Abe T."/>
            <person name="Watanabe K."/>
        </authorList>
    </citation>
    <scope>NUCLEOTIDE SEQUENCE [LARGE SCALE GENOMIC DNA]</scope>
    <source>
        <strain>DSM 13744 / JCM 10971 / SI</strain>
    </source>
</reference>
<sequence>MLEFNATLLAQIVDFIILLIFLRLVAYKPLMKLLSERSEHIERNIAAAEKERQQAEQLRASYEAEMRRAREQAQEIIQKATKAGEEQALQIIENAKNETVRMKETALAEIEREKQKAMAELRDQVVTLSILVAGKIINRSMSSEIQHEIVRDFIKEAGELPC</sequence>
<organism>
    <name type="scientific">Pelotomaculum thermopropionicum (strain DSM 13744 / JCM 10971 / SI)</name>
    <dbReference type="NCBI Taxonomy" id="370438"/>
    <lineage>
        <taxon>Bacteria</taxon>
        <taxon>Bacillati</taxon>
        <taxon>Bacillota</taxon>
        <taxon>Clostridia</taxon>
        <taxon>Eubacteriales</taxon>
        <taxon>Desulfotomaculaceae</taxon>
        <taxon>Pelotomaculum</taxon>
    </lineage>
</organism>
<gene>
    <name evidence="1" type="primary">atpF</name>
    <name type="ordered locus">PTH_2816</name>
</gene>
<accession>A5CYE6</accession>
<proteinExistence type="inferred from homology"/>
<feature type="chain" id="PRO_0000368653" description="ATP synthase subunit b">
    <location>
        <begin position="1"/>
        <end position="162"/>
    </location>
</feature>
<feature type="transmembrane region" description="Helical" evidence="1">
    <location>
        <begin position="2"/>
        <end position="22"/>
    </location>
</feature>
<evidence type="ECO:0000255" key="1">
    <source>
        <dbReference type="HAMAP-Rule" id="MF_01398"/>
    </source>
</evidence>
<protein>
    <recommendedName>
        <fullName evidence="1">ATP synthase subunit b</fullName>
    </recommendedName>
    <alternativeName>
        <fullName evidence="1">ATP synthase F(0) sector subunit b</fullName>
    </alternativeName>
    <alternativeName>
        <fullName evidence="1">ATPase subunit I</fullName>
    </alternativeName>
    <alternativeName>
        <fullName evidence="1">F-type ATPase subunit b</fullName>
        <shortName evidence="1">F-ATPase subunit b</shortName>
    </alternativeName>
</protein>
<name>ATPF_PELTS</name>
<dbReference type="EMBL" id="AP009389">
    <property type="protein sequence ID" value="BAF60997.1"/>
    <property type="molecule type" value="Genomic_DNA"/>
</dbReference>
<dbReference type="SMR" id="A5CYE6"/>
<dbReference type="STRING" id="370438.PTH_2816"/>
<dbReference type="KEGG" id="pth:PTH_2816"/>
<dbReference type="eggNOG" id="COG0711">
    <property type="taxonomic scope" value="Bacteria"/>
</dbReference>
<dbReference type="HOGENOM" id="CLU_079215_4_2_9"/>
<dbReference type="Proteomes" id="UP000006556">
    <property type="component" value="Chromosome"/>
</dbReference>
<dbReference type="GO" id="GO:0005886">
    <property type="term" value="C:plasma membrane"/>
    <property type="evidence" value="ECO:0007669"/>
    <property type="project" value="UniProtKB-SubCell"/>
</dbReference>
<dbReference type="GO" id="GO:0045259">
    <property type="term" value="C:proton-transporting ATP synthase complex"/>
    <property type="evidence" value="ECO:0007669"/>
    <property type="project" value="UniProtKB-KW"/>
</dbReference>
<dbReference type="GO" id="GO:0046933">
    <property type="term" value="F:proton-transporting ATP synthase activity, rotational mechanism"/>
    <property type="evidence" value="ECO:0007669"/>
    <property type="project" value="UniProtKB-UniRule"/>
</dbReference>
<dbReference type="GO" id="GO:0046961">
    <property type="term" value="F:proton-transporting ATPase activity, rotational mechanism"/>
    <property type="evidence" value="ECO:0007669"/>
    <property type="project" value="TreeGrafter"/>
</dbReference>
<dbReference type="CDD" id="cd06503">
    <property type="entry name" value="ATP-synt_Fo_b"/>
    <property type="match status" value="1"/>
</dbReference>
<dbReference type="Gene3D" id="6.10.250.1580">
    <property type="match status" value="1"/>
</dbReference>
<dbReference type="HAMAP" id="MF_01398">
    <property type="entry name" value="ATP_synth_b_bprime"/>
    <property type="match status" value="1"/>
</dbReference>
<dbReference type="InterPro" id="IPR028987">
    <property type="entry name" value="ATP_synth_B-like_membr_sf"/>
</dbReference>
<dbReference type="InterPro" id="IPR002146">
    <property type="entry name" value="ATP_synth_b/b'su_bac/chlpt"/>
</dbReference>
<dbReference type="InterPro" id="IPR005864">
    <property type="entry name" value="ATP_synth_F0_bsu_bac"/>
</dbReference>
<dbReference type="InterPro" id="IPR050059">
    <property type="entry name" value="ATP_synthase_B_chain"/>
</dbReference>
<dbReference type="NCBIfam" id="TIGR01144">
    <property type="entry name" value="ATP_synt_b"/>
    <property type="match status" value="1"/>
</dbReference>
<dbReference type="PANTHER" id="PTHR33445">
    <property type="entry name" value="ATP SYNTHASE SUBUNIT B', CHLOROPLASTIC"/>
    <property type="match status" value="1"/>
</dbReference>
<dbReference type="PANTHER" id="PTHR33445:SF2">
    <property type="entry name" value="ATP SYNTHASE SUBUNIT B', CHLOROPLASTIC"/>
    <property type="match status" value="1"/>
</dbReference>
<dbReference type="Pfam" id="PF00430">
    <property type="entry name" value="ATP-synt_B"/>
    <property type="match status" value="1"/>
</dbReference>
<dbReference type="SUPFAM" id="SSF81573">
    <property type="entry name" value="F1F0 ATP synthase subunit B, membrane domain"/>
    <property type="match status" value="1"/>
</dbReference>
<comment type="function">
    <text evidence="1">F(1)F(0) ATP synthase produces ATP from ADP in the presence of a proton or sodium gradient. F-type ATPases consist of two structural domains, F(1) containing the extramembraneous catalytic core and F(0) containing the membrane proton channel, linked together by a central stalk and a peripheral stalk. During catalysis, ATP synthesis in the catalytic domain of F(1) is coupled via a rotary mechanism of the central stalk subunits to proton translocation.</text>
</comment>
<comment type="function">
    <text evidence="1">Component of the F(0) channel, it forms part of the peripheral stalk, linking F(1) to F(0).</text>
</comment>
<comment type="subunit">
    <text evidence="1">F-type ATPases have 2 components, F(1) - the catalytic core - and F(0) - the membrane proton channel. F(1) has five subunits: alpha(3), beta(3), gamma(1), delta(1), epsilon(1). F(0) has three main subunits: a(1), b(2) and c(10-14). The alpha and beta chains form an alternating ring which encloses part of the gamma chain. F(1) is attached to F(0) by a central stalk formed by the gamma and epsilon chains, while a peripheral stalk is formed by the delta and b chains.</text>
</comment>
<comment type="subcellular location">
    <subcellularLocation>
        <location evidence="1">Cell membrane</location>
        <topology evidence="1">Single-pass membrane protein</topology>
    </subcellularLocation>
</comment>
<comment type="similarity">
    <text evidence="1">Belongs to the ATPase B chain family.</text>
</comment>